<sequence length="145" mass="15848">MDLLLINGPNLNLVGKREPSIYGSQTLEDIQEELLTLANELGANLKFFQSNSEGEMIDCIQNSVGSIDGILINAGAYTHTSIALRDALLGVAIPYVEVHLSNIYSREEFRHKSFLSDKALGLVCGFGANSYQLALEGIVSYLKRV</sequence>
<proteinExistence type="inferred from homology"/>
<dbReference type="EC" id="4.2.1.10" evidence="1"/>
<dbReference type="EMBL" id="CP000553">
    <property type="protein sequence ID" value="ABM75002.1"/>
    <property type="molecule type" value="Genomic_DNA"/>
</dbReference>
<dbReference type="RefSeq" id="WP_011823189.1">
    <property type="nucleotide sequence ID" value="NC_008819.1"/>
</dbReference>
<dbReference type="SMR" id="A2C0J2"/>
<dbReference type="KEGG" id="pme:NATL1_04381"/>
<dbReference type="eggNOG" id="COG0757">
    <property type="taxonomic scope" value="Bacteria"/>
</dbReference>
<dbReference type="HOGENOM" id="CLU_090968_1_0_3"/>
<dbReference type="UniPathway" id="UPA00053">
    <property type="reaction ID" value="UER00086"/>
</dbReference>
<dbReference type="Proteomes" id="UP000002592">
    <property type="component" value="Chromosome"/>
</dbReference>
<dbReference type="GO" id="GO:0003855">
    <property type="term" value="F:3-dehydroquinate dehydratase activity"/>
    <property type="evidence" value="ECO:0007669"/>
    <property type="project" value="UniProtKB-UniRule"/>
</dbReference>
<dbReference type="GO" id="GO:0008652">
    <property type="term" value="P:amino acid biosynthetic process"/>
    <property type="evidence" value="ECO:0007669"/>
    <property type="project" value="UniProtKB-KW"/>
</dbReference>
<dbReference type="GO" id="GO:0009073">
    <property type="term" value="P:aromatic amino acid family biosynthetic process"/>
    <property type="evidence" value="ECO:0007669"/>
    <property type="project" value="UniProtKB-KW"/>
</dbReference>
<dbReference type="GO" id="GO:0009423">
    <property type="term" value="P:chorismate biosynthetic process"/>
    <property type="evidence" value="ECO:0007669"/>
    <property type="project" value="UniProtKB-UniRule"/>
</dbReference>
<dbReference type="GO" id="GO:0019631">
    <property type="term" value="P:quinate catabolic process"/>
    <property type="evidence" value="ECO:0007669"/>
    <property type="project" value="TreeGrafter"/>
</dbReference>
<dbReference type="CDD" id="cd00466">
    <property type="entry name" value="DHQase_II"/>
    <property type="match status" value="1"/>
</dbReference>
<dbReference type="Gene3D" id="3.40.50.9100">
    <property type="entry name" value="Dehydroquinase, class II"/>
    <property type="match status" value="1"/>
</dbReference>
<dbReference type="HAMAP" id="MF_00169">
    <property type="entry name" value="AroQ"/>
    <property type="match status" value="1"/>
</dbReference>
<dbReference type="InterPro" id="IPR001874">
    <property type="entry name" value="DHquinase_II"/>
</dbReference>
<dbReference type="InterPro" id="IPR036441">
    <property type="entry name" value="DHquinase_II_sf"/>
</dbReference>
<dbReference type="NCBIfam" id="TIGR01088">
    <property type="entry name" value="aroQ"/>
    <property type="match status" value="1"/>
</dbReference>
<dbReference type="NCBIfam" id="NF003804">
    <property type="entry name" value="PRK05395.1-1"/>
    <property type="match status" value="1"/>
</dbReference>
<dbReference type="NCBIfam" id="NF003805">
    <property type="entry name" value="PRK05395.1-2"/>
    <property type="match status" value="1"/>
</dbReference>
<dbReference type="NCBIfam" id="NF003806">
    <property type="entry name" value="PRK05395.1-3"/>
    <property type="match status" value="1"/>
</dbReference>
<dbReference type="NCBIfam" id="NF003807">
    <property type="entry name" value="PRK05395.1-4"/>
    <property type="match status" value="1"/>
</dbReference>
<dbReference type="PANTHER" id="PTHR21272">
    <property type="entry name" value="CATABOLIC 3-DEHYDROQUINASE"/>
    <property type="match status" value="1"/>
</dbReference>
<dbReference type="PANTHER" id="PTHR21272:SF3">
    <property type="entry name" value="CATABOLIC 3-DEHYDROQUINASE"/>
    <property type="match status" value="1"/>
</dbReference>
<dbReference type="Pfam" id="PF01220">
    <property type="entry name" value="DHquinase_II"/>
    <property type="match status" value="1"/>
</dbReference>
<dbReference type="PIRSF" id="PIRSF001399">
    <property type="entry name" value="DHquinase_II"/>
    <property type="match status" value="1"/>
</dbReference>
<dbReference type="SUPFAM" id="SSF52304">
    <property type="entry name" value="Type II 3-dehydroquinate dehydratase"/>
    <property type="match status" value="1"/>
</dbReference>
<feature type="chain" id="PRO_1000023493" description="3-dehydroquinate dehydratase">
    <location>
        <begin position="1"/>
        <end position="145"/>
    </location>
</feature>
<feature type="active site" description="Proton acceptor" evidence="1">
    <location>
        <position position="22"/>
    </location>
</feature>
<feature type="active site" description="Proton donor" evidence="1">
    <location>
        <position position="99"/>
    </location>
</feature>
<feature type="binding site" evidence="1">
    <location>
        <position position="73"/>
    </location>
    <ligand>
        <name>substrate</name>
    </ligand>
</feature>
<feature type="binding site" evidence="1">
    <location>
        <position position="79"/>
    </location>
    <ligand>
        <name>substrate</name>
    </ligand>
</feature>
<feature type="binding site" evidence="1">
    <location>
        <position position="86"/>
    </location>
    <ligand>
        <name>substrate</name>
    </ligand>
</feature>
<feature type="binding site" evidence="1">
    <location>
        <begin position="100"/>
        <end position="101"/>
    </location>
    <ligand>
        <name>substrate</name>
    </ligand>
</feature>
<feature type="binding site" evidence="1">
    <location>
        <position position="110"/>
    </location>
    <ligand>
        <name>substrate</name>
    </ligand>
</feature>
<feature type="site" description="Transition state stabilizer" evidence="1">
    <location>
        <position position="17"/>
    </location>
</feature>
<protein>
    <recommendedName>
        <fullName evidence="1">3-dehydroquinate dehydratase</fullName>
        <shortName evidence="1">3-dehydroquinase</shortName>
        <ecNumber evidence="1">4.2.1.10</ecNumber>
    </recommendedName>
    <alternativeName>
        <fullName evidence="1">Type II DHQase</fullName>
    </alternativeName>
</protein>
<accession>A2C0J2</accession>
<organism>
    <name type="scientific">Prochlorococcus marinus (strain NATL1A)</name>
    <dbReference type="NCBI Taxonomy" id="167555"/>
    <lineage>
        <taxon>Bacteria</taxon>
        <taxon>Bacillati</taxon>
        <taxon>Cyanobacteriota</taxon>
        <taxon>Cyanophyceae</taxon>
        <taxon>Synechococcales</taxon>
        <taxon>Prochlorococcaceae</taxon>
        <taxon>Prochlorococcus</taxon>
    </lineage>
</organism>
<reference key="1">
    <citation type="journal article" date="2007" name="PLoS Genet.">
        <title>Patterns and implications of gene gain and loss in the evolution of Prochlorococcus.</title>
        <authorList>
            <person name="Kettler G.C."/>
            <person name="Martiny A.C."/>
            <person name="Huang K."/>
            <person name="Zucker J."/>
            <person name="Coleman M.L."/>
            <person name="Rodrigue S."/>
            <person name="Chen F."/>
            <person name="Lapidus A."/>
            <person name="Ferriera S."/>
            <person name="Johnson J."/>
            <person name="Steglich C."/>
            <person name="Church G.M."/>
            <person name="Richardson P."/>
            <person name="Chisholm S.W."/>
        </authorList>
    </citation>
    <scope>NUCLEOTIDE SEQUENCE [LARGE SCALE GENOMIC DNA]</scope>
    <source>
        <strain>NATL1A</strain>
    </source>
</reference>
<gene>
    <name evidence="1" type="primary">aroQ</name>
    <name type="ordered locus">NATL1_04381</name>
</gene>
<keyword id="KW-0028">Amino-acid biosynthesis</keyword>
<keyword id="KW-0057">Aromatic amino acid biosynthesis</keyword>
<keyword id="KW-0456">Lyase</keyword>
<name>AROQ_PROM1</name>
<evidence type="ECO:0000255" key="1">
    <source>
        <dbReference type="HAMAP-Rule" id="MF_00169"/>
    </source>
</evidence>
<comment type="function">
    <text evidence="1">Catalyzes a trans-dehydration via an enolate intermediate.</text>
</comment>
<comment type="catalytic activity">
    <reaction evidence="1">
        <text>3-dehydroquinate = 3-dehydroshikimate + H2O</text>
        <dbReference type="Rhea" id="RHEA:21096"/>
        <dbReference type="ChEBI" id="CHEBI:15377"/>
        <dbReference type="ChEBI" id="CHEBI:16630"/>
        <dbReference type="ChEBI" id="CHEBI:32364"/>
        <dbReference type="EC" id="4.2.1.10"/>
    </reaction>
</comment>
<comment type="pathway">
    <text evidence="1">Metabolic intermediate biosynthesis; chorismate biosynthesis; chorismate from D-erythrose 4-phosphate and phosphoenolpyruvate: step 3/7.</text>
</comment>
<comment type="subunit">
    <text evidence="1">Homododecamer.</text>
</comment>
<comment type="similarity">
    <text evidence="1">Belongs to the type-II 3-dehydroquinase family.</text>
</comment>